<proteinExistence type="inferred from homology"/>
<evidence type="ECO:0000255" key="1">
    <source>
        <dbReference type="HAMAP-Rule" id="MF_00634"/>
    </source>
</evidence>
<feature type="chain" id="PRO_1000130707" description="UPF0235 protein YggU">
    <location>
        <begin position="1"/>
        <end position="96"/>
    </location>
</feature>
<accession>B5FUW5</accession>
<protein>
    <recommendedName>
        <fullName evidence="1">UPF0235 protein YggU</fullName>
    </recommendedName>
</protein>
<reference key="1">
    <citation type="journal article" date="2011" name="J. Bacteriol.">
        <title>Comparative genomics of 28 Salmonella enterica isolates: evidence for CRISPR-mediated adaptive sublineage evolution.</title>
        <authorList>
            <person name="Fricke W.F."/>
            <person name="Mammel M.K."/>
            <person name="McDermott P.F."/>
            <person name="Tartera C."/>
            <person name="White D.G."/>
            <person name="Leclerc J.E."/>
            <person name="Ravel J."/>
            <person name="Cebula T.A."/>
        </authorList>
    </citation>
    <scope>NUCLEOTIDE SEQUENCE [LARGE SCALE GENOMIC DNA]</scope>
    <source>
        <strain>CT_02021853</strain>
    </source>
</reference>
<name>YGGU_SALDC</name>
<organism>
    <name type="scientific">Salmonella dublin (strain CT_02021853)</name>
    <dbReference type="NCBI Taxonomy" id="439851"/>
    <lineage>
        <taxon>Bacteria</taxon>
        <taxon>Pseudomonadati</taxon>
        <taxon>Pseudomonadota</taxon>
        <taxon>Gammaproteobacteria</taxon>
        <taxon>Enterobacterales</taxon>
        <taxon>Enterobacteriaceae</taxon>
        <taxon>Salmonella</taxon>
    </lineage>
</organism>
<dbReference type="EMBL" id="CP001144">
    <property type="protein sequence ID" value="ACH76236.1"/>
    <property type="molecule type" value="Genomic_DNA"/>
</dbReference>
<dbReference type="RefSeq" id="WP_001277205.1">
    <property type="nucleotide sequence ID" value="NC_011205.1"/>
</dbReference>
<dbReference type="SMR" id="B5FUW5"/>
<dbReference type="KEGG" id="sed:SeD_A3445"/>
<dbReference type="HOGENOM" id="CLU_130694_5_0_6"/>
<dbReference type="Proteomes" id="UP000008322">
    <property type="component" value="Chromosome"/>
</dbReference>
<dbReference type="GO" id="GO:0005737">
    <property type="term" value="C:cytoplasm"/>
    <property type="evidence" value="ECO:0007669"/>
    <property type="project" value="TreeGrafter"/>
</dbReference>
<dbReference type="Gene3D" id="3.30.1200.10">
    <property type="entry name" value="YggU-like"/>
    <property type="match status" value="1"/>
</dbReference>
<dbReference type="HAMAP" id="MF_00634">
    <property type="entry name" value="UPF0235"/>
    <property type="match status" value="1"/>
</dbReference>
<dbReference type="InterPro" id="IPR003746">
    <property type="entry name" value="DUF167"/>
</dbReference>
<dbReference type="InterPro" id="IPR036591">
    <property type="entry name" value="YggU-like_sf"/>
</dbReference>
<dbReference type="NCBIfam" id="TIGR00251">
    <property type="entry name" value="DUF167 family protein"/>
    <property type="match status" value="1"/>
</dbReference>
<dbReference type="NCBIfam" id="NF003466">
    <property type="entry name" value="PRK05090.1"/>
    <property type="match status" value="1"/>
</dbReference>
<dbReference type="PANTHER" id="PTHR13420">
    <property type="entry name" value="UPF0235 PROTEIN C15ORF40"/>
    <property type="match status" value="1"/>
</dbReference>
<dbReference type="PANTHER" id="PTHR13420:SF7">
    <property type="entry name" value="UPF0235 PROTEIN C15ORF40"/>
    <property type="match status" value="1"/>
</dbReference>
<dbReference type="Pfam" id="PF02594">
    <property type="entry name" value="DUF167"/>
    <property type="match status" value="1"/>
</dbReference>
<dbReference type="SMART" id="SM01152">
    <property type="entry name" value="DUF167"/>
    <property type="match status" value="1"/>
</dbReference>
<dbReference type="SUPFAM" id="SSF69786">
    <property type="entry name" value="YggU-like"/>
    <property type="match status" value="1"/>
</dbReference>
<gene>
    <name evidence="1" type="primary">yggU</name>
    <name type="ordered locus">SeD_A3445</name>
</gene>
<sequence length="96" mass="10517">MSAVTRCEDGLVLRLYIQPKASRDSIVGLHGDEVKVAITAPPVDGQANSHLTKFLGKQFRVAKSQIVIEKGELGRHKQVKIIHPQQIPPEIAALTE</sequence>
<comment type="similarity">
    <text evidence="1">Belongs to the UPF0235 family.</text>
</comment>